<reference key="1">
    <citation type="journal article" date="2011" name="PLoS Genet.">
        <title>Genomic analysis of the necrotrophic fungal pathogens Sclerotinia sclerotiorum and Botrytis cinerea.</title>
        <authorList>
            <person name="Amselem J."/>
            <person name="Cuomo C.A."/>
            <person name="van Kan J.A.L."/>
            <person name="Viaud M."/>
            <person name="Benito E.P."/>
            <person name="Couloux A."/>
            <person name="Coutinho P.M."/>
            <person name="de Vries R.P."/>
            <person name="Dyer P.S."/>
            <person name="Fillinger S."/>
            <person name="Fournier E."/>
            <person name="Gout L."/>
            <person name="Hahn M."/>
            <person name="Kohn L."/>
            <person name="Lapalu N."/>
            <person name="Plummer K.M."/>
            <person name="Pradier J.-M."/>
            <person name="Quevillon E."/>
            <person name="Sharon A."/>
            <person name="Simon A."/>
            <person name="ten Have A."/>
            <person name="Tudzynski B."/>
            <person name="Tudzynski P."/>
            <person name="Wincker P."/>
            <person name="Andrew M."/>
            <person name="Anthouard V."/>
            <person name="Beever R.E."/>
            <person name="Beffa R."/>
            <person name="Benoit I."/>
            <person name="Bouzid O."/>
            <person name="Brault B."/>
            <person name="Chen Z."/>
            <person name="Choquer M."/>
            <person name="Collemare J."/>
            <person name="Cotton P."/>
            <person name="Danchin E.G."/>
            <person name="Da Silva C."/>
            <person name="Gautier A."/>
            <person name="Giraud C."/>
            <person name="Giraud T."/>
            <person name="Gonzalez C."/>
            <person name="Grossetete S."/>
            <person name="Gueldener U."/>
            <person name="Henrissat B."/>
            <person name="Howlett B.J."/>
            <person name="Kodira C."/>
            <person name="Kretschmer M."/>
            <person name="Lappartient A."/>
            <person name="Leroch M."/>
            <person name="Levis C."/>
            <person name="Mauceli E."/>
            <person name="Neuveglise C."/>
            <person name="Oeser B."/>
            <person name="Pearson M."/>
            <person name="Poulain J."/>
            <person name="Poussereau N."/>
            <person name="Quesneville H."/>
            <person name="Rascle C."/>
            <person name="Schumacher J."/>
            <person name="Segurens B."/>
            <person name="Sexton A."/>
            <person name="Silva E."/>
            <person name="Sirven C."/>
            <person name="Soanes D.M."/>
            <person name="Talbot N.J."/>
            <person name="Templeton M."/>
            <person name="Yandava C."/>
            <person name="Yarden O."/>
            <person name="Zeng Q."/>
            <person name="Rollins J.A."/>
            <person name="Lebrun M.-H."/>
            <person name="Dickman M."/>
        </authorList>
    </citation>
    <scope>NUCLEOTIDE SEQUENCE [LARGE SCALE GENOMIC DNA]</scope>
    <source>
        <strain>ATCC 18683 / 1980 / Ss-1</strain>
    </source>
</reference>
<evidence type="ECO:0000250" key="1"/>
<evidence type="ECO:0000255" key="2"/>
<evidence type="ECO:0000255" key="3">
    <source>
        <dbReference type="PROSITE-ProRule" id="PRU10095"/>
    </source>
</evidence>
<evidence type="ECO:0000305" key="4"/>
<protein>
    <recommendedName>
        <fullName>Neutral protease 2 homolog SS1G_13741</fullName>
        <ecNumber>3.4.24.39</ecNumber>
    </recommendedName>
    <alternativeName>
        <fullName>Deuterolysin SS1G_13741</fullName>
    </alternativeName>
</protein>
<keyword id="KW-0165">Cleavage on pair of basic residues</keyword>
<keyword id="KW-1015">Disulfide bond</keyword>
<keyword id="KW-0325">Glycoprotein</keyword>
<keyword id="KW-0378">Hydrolase</keyword>
<keyword id="KW-0479">Metal-binding</keyword>
<keyword id="KW-0482">Metalloprotease</keyword>
<keyword id="KW-0645">Protease</keyword>
<keyword id="KW-1185">Reference proteome</keyword>
<keyword id="KW-0964">Secreted</keyword>
<keyword id="KW-0732">Signal</keyword>
<keyword id="KW-0862">Zinc</keyword>
<keyword id="KW-0865">Zymogen</keyword>
<dbReference type="EC" id="3.4.24.39"/>
<dbReference type="EMBL" id="CH476647">
    <property type="protein sequence ID" value="EDN98882.1"/>
    <property type="molecule type" value="Genomic_DNA"/>
</dbReference>
<dbReference type="RefSeq" id="XP_001585173.1">
    <property type="nucleotide sequence ID" value="XM_001585123.1"/>
</dbReference>
<dbReference type="SMR" id="A7F811"/>
<dbReference type="STRING" id="665079.A7F811"/>
<dbReference type="MEROPS" id="M35.001"/>
<dbReference type="EnsemblFungi" id="EDN98882">
    <property type="protein sequence ID" value="EDN98882"/>
    <property type="gene ID" value="SS1G_13741"/>
</dbReference>
<dbReference type="GeneID" id="5481351"/>
<dbReference type="KEGG" id="ssl:SS1G_13741"/>
<dbReference type="eggNOG" id="ENOG502SGF5">
    <property type="taxonomic scope" value="Eukaryota"/>
</dbReference>
<dbReference type="HOGENOM" id="CLU_039313_1_1_1"/>
<dbReference type="InParanoid" id="A7F811"/>
<dbReference type="OMA" id="QTMWDGN"/>
<dbReference type="Proteomes" id="UP000001312">
    <property type="component" value="Unassembled WGS sequence"/>
</dbReference>
<dbReference type="GO" id="GO:0005576">
    <property type="term" value="C:extracellular region"/>
    <property type="evidence" value="ECO:0007669"/>
    <property type="project" value="UniProtKB-SubCell"/>
</dbReference>
<dbReference type="GO" id="GO:0046872">
    <property type="term" value="F:metal ion binding"/>
    <property type="evidence" value="ECO:0007669"/>
    <property type="project" value="UniProtKB-KW"/>
</dbReference>
<dbReference type="GO" id="GO:0004222">
    <property type="term" value="F:metalloendopeptidase activity"/>
    <property type="evidence" value="ECO:0007669"/>
    <property type="project" value="InterPro"/>
</dbReference>
<dbReference type="GO" id="GO:0006508">
    <property type="term" value="P:proteolysis"/>
    <property type="evidence" value="ECO:0007669"/>
    <property type="project" value="UniProtKB-KW"/>
</dbReference>
<dbReference type="CDD" id="cd11008">
    <property type="entry name" value="M35_deuterolysin_like"/>
    <property type="match status" value="1"/>
</dbReference>
<dbReference type="Gene3D" id="2.60.40.2970">
    <property type="match status" value="1"/>
</dbReference>
<dbReference type="Gene3D" id="3.40.390.10">
    <property type="entry name" value="Collagenase (Catalytic Domain)"/>
    <property type="match status" value="1"/>
</dbReference>
<dbReference type="InterPro" id="IPR050414">
    <property type="entry name" value="Fungal_M35_metalloproteases"/>
</dbReference>
<dbReference type="InterPro" id="IPR024079">
    <property type="entry name" value="MetalloPept_cat_dom_sf"/>
</dbReference>
<dbReference type="InterPro" id="IPR001384">
    <property type="entry name" value="Peptidase_M35"/>
</dbReference>
<dbReference type="PANTHER" id="PTHR37016">
    <property type="match status" value="1"/>
</dbReference>
<dbReference type="PANTHER" id="PTHR37016:SF3">
    <property type="entry name" value="NEUTRAL PROTEASE 2-RELATED"/>
    <property type="match status" value="1"/>
</dbReference>
<dbReference type="Pfam" id="PF02102">
    <property type="entry name" value="Peptidase_M35"/>
    <property type="match status" value="1"/>
</dbReference>
<dbReference type="PRINTS" id="PR00768">
    <property type="entry name" value="DEUTEROLYSIN"/>
</dbReference>
<dbReference type="SUPFAM" id="SSF55486">
    <property type="entry name" value="Metalloproteases ('zincins'), catalytic domain"/>
    <property type="match status" value="1"/>
</dbReference>
<dbReference type="PROSITE" id="PS00142">
    <property type="entry name" value="ZINC_PROTEASE"/>
    <property type="match status" value="1"/>
</dbReference>
<comment type="function">
    <text evidence="1">Secreted metalloproteinase that allows assimilation of proteinaceous substrates. Shows high activities on basic nuclear substrates such as histone and protamine (By similarity).</text>
</comment>
<comment type="catalytic activity">
    <reaction>
        <text>Preferential cleavage of bonds with hydrophobic residues in P1'. Also 3-Asn-|-Gln-4 and 8-Gly-|-Ser-9 bonds in insulin B chain.</text>
        <dbReference type="EC" id="3.4.24.39"/>
    </reaction>
</comment>
<comment type="cofactor">
    <cofactor evidence="1">
        <name>Zn(2+)</name>
        <dbReference type="ChEBI" id="CHEBI:29105"/>
    </cofactor>
    <text evidence="1">Binds 1 zinc ion per subunit.</text>
</comment>
<comment type="subcellular location">
    <subcellularLocation>
        <location evidence="1">Secreted</location>
    </subcellularLocation>
</comment>
<comment type="similarity">
    <text evidence="4">Belongs to the peptidase M35 family.</text>
</comment>
<proteinExistence type="inferred from homology"/>
<sequence length="360" mass="38095">MSILRAKTSGAQQHEEFRMAFKLSYITGRQDNNVLEVTLAAGQNAVVHATVKNTGTEALNLLKYGTLFDSAPVQKVDVYEGENAVPFKGILRSIQRTDLAPEVFHTLAAGETFETTFNAAEVHDLSSTNYTFIAEGTIPVAPVGSTKISDTIFFKSNTLTIPVDGAAAQSMAKAIPASIDRRTILQSGCSTTQKTQTTQALSYCAQLARAASTAASSGSATKFSEYFKTTAAATRSVVAARLSAVASQCSSLTSGSTTYYCTDIYNYCSSNVLAYTIPSTNEIVNCPLYYSALPTLSGTCHAQDRATTSLHEFTHAPATYSPGTADNGYGYSAAVALTSAKAVLNADSYALYANAIYVGC</sequence>
<name>NPIIA_SCLS1</name>
<organism>
    <name type="scientific">Sclerotinia sclerotiorum (strain ATCC 18683 / 1980 / Ss-1)</name>
    <name type="common">White mold</name>
    <name type="synonym">Whetzelinia sclerotiorum</name>
    <dbReference type="NCBI Taxonomy" id="665079"/>
    <lineage>
        <taxon>Eukaryota</taxon>
        <taxon>Fungi</taxon>
        <taxon>Dikarya</taxon>
        <taxon>Ascomycota</taxon>
        <taxon>Pezizomycotina</taxon>
        <taxon>Leotiomycetes</taxon>
        <taxon>Helotiales</taxon>
        <taxon>Sclerotiniaceae</taxon>
        <taxon>Sclerotinia</taxon>
    </lineage>
</organism>
<feature type="signal peptide" evidence="2">
    <location>
        <begin position="1"/>
        <end status="unknown"/>
    </location>
</feature>
<feature type="propeptide" id="PRO_0000407114" evidence="1">
    <location>
        <begin status="unknown"/>
        <end position="185"/>
    </location>
</feature>
<feature type="chain" id="PRO_0000407115" description="Neutral protease 2 homolog SS1G_13741">
    <location>
        <begin position="186"/>
        <end position="360"/>
    </location>
</feature>
<feature type="active site" evidence="3">
    <location>
        <position position="312"/>
    </location>
</feature>
<feature type="binding site" evidence="3">
    <location>
        <position position="311"/>
    </location>
    <ligand>
        <name>Zn(2+)</name>
        <dbReference type="ChEBI" id="CHEBI:29105"/>
        <note>catalytic</note>
    </ligand>
</feature>
<feature type="binding site" evidence="3">
    <location>
        <position position="315"/>
    </location>
    <ligand>
        <name>Zn(2+)</name>
        <dbReference type="ChEBI" id="CHEBI:29105"/>
        <note>catalytic</note>
    </ligand>
</feature>
<feature type="binding site" evidence="3">
    <location>
        <position position="326"/>
    </location>
    <ligand>
        <name>Zn(2+)</name>
        <dbReference type="ChEBI" id="CHEBI:29105"/>
        <note>catalytic</note>
    </ligand>
</feature>
<feature type="glycosylation site" description="N-linked (GlcNAc...) asparagine" evidence="2">
    <location>
        <position position="129"/>
    </location>
</feature>
<feature type="disulfide bond" evidence="1">
    <location>
        <begin position="189"/>
        <end position="261"/>
    </location>
</feature>
<feature type="disulfide bond" evidence="1">
    <location>
        <begin position="268"/>
        <end position="286"/>
    </location>
</feature>
<accession>A7F811</accession>
<gene>
    <name type="ORF">SS1G_13741</name>
</gene>